<keyword id="KW-0226">DNA condensation</keyword>
<keyword id="KW-0238">DNA-binding</keyword>
<gene>
    <name type="primary">hupB</name>
    <name type="ordered locus">NMA1397</name>
</gene>
<proteinExistence type="inferred from homology"/>
<name>DBHB_NEIMA</name>
<dbReference type="EMBL" id="AL157959">
    <property type="protein sequence ID" value="CAM08565.1"/>
    <property type="molecule type" value="Genomic_DNA"/>
</dbReference>
<dbReference type="RefSeq" id="WP_002213508.1">
    <property type="nucleotide sequence ID" value="NC_003116.1"/>
</dbReference>
<dbReference type="SMR" id="P64388"/>
<dbReference type="EnsemblBacteria" id="CAM08565">
    <property type="protein sequence ID" value="CAM08565"/>
    <property type="gene ID" value="NMA1397"/>
</dbReference>
<dbReference type="KEGG" id="nma:NMA1397"/>
<dbReference type="HOGENOM" id="CLU_105066_3_3_4"/>
<dbReference type="Proteomes" id="UP000000626">
    <property type="component" value="Chromosome"/>
</dbReference>
<dbReference type="GO" id="GO:0005829">
    <property type="term" value="C:cytosol"/>
    <property type="evidence" value="ECO:0007669"/>
    <property type="project" value="TreeGrafter"/>
</dbReference>
<dbReference type="GO" id="GO:0003677">
    <property type="term" value="F:DNA binding"/>
    <property type="evidence" value="ECO:0007669"/>
    <property type="project" value="UniProtKB-KW"/>
</dbReference>
<dbReference type="GO" id="GO:0030527">
    <property type="term" value="F:structural constituent of chromatin"/>
    <property type="evidence" value="ECO:0007669"/>
    <property type="project" value="InterPro"/>
</dbReference>
<dbReference type="GO" id="GO:0030261">
    <property type="term" value="P:chromosome condensation"/>
    <property type="evidence" value="ECO:0007669"/>
    <property type="project" value="UniProtKB-KW"/>
</dbReference>
<dbReference type="CDD" id="cd13831">
    <property type="entry name" value="HU"/>
    <property type="match status" value="1"/>
</dbReference>
<dbReference type="FunFam" id="4.10.520.10:FF:000001">
    <property type="entry name" value="DNA-binding protein HU"/>
    <property type="match status" value="1"/>
</dbReference>
<dbReference type="Gene3D" id="4.10.520.10">
    <property type="entry name" value="IHF-like DNA-binding proteins"/>
    <property type="match status" value="1"/>
</dbReference>
<dbReference type="InterPro" id="IPR000119">
    <property type="entry name" value="Hist_DNA-bd"/>
</dbReference>
<dbReference type="InterPro" id="IPR020816">
    <property type="entry name" value="Histone-like_DNA-bd_CS"/>
</dbReference>
<dbReference type="InterPro" id="IPR010992">
    <property type="entry name" value="IHF-like_DNA-bd_dom_sf"/>
</dbReference>
<dbReference type="PANTHER" id="PTHR33175">
    <property type="entry name" value="DNA-BINDING PROTEIN HU"/>
    <property type="match status" value="1"/>
</dbReference>
<dbReference type="PANTHER" id="PTHR33175:SF3">
    <property type="entry name" value="DNA-BINDING PROTEIN HU-BETA"/>
    <property type="match status" value="1"/>
</dbReference>
<dbReference type="Pfam" id="PF00216">
    <property type="entry name" value="Bac_DNA_binding"/>
    <property type="match status" value="1"/>
</dbReference>
<dbReference type="PRINTS" id="PR01727">
    <property type="entry name" value="DNABINDINGHU"/>
</dbReference>
<dbReference type="SMART" id="SM00411">
    <property type="entry name" value="BHL"/>
    <property type="match status" value="1"/>
</dbReference>
<dbReference type="SUPFAM" id="SSF47729">
    <property type="entry name" value="IHF-like DNA-binding proteins"/>
    <property type="match status" value="1"/>
</dbReference>
<dbReference type="PROSITE" id="PS00045">
    <property type="entry name" value="HISTONE_LIKE"/>
    <property type="match status" value="1"/>
</dbReference>
<sequence length="89" mass="9348">MNKSELIEAIAQEADISKAAAQKALDATTNAVTTALKQGDTVTLVGFGTFYVGERAERQGRNPKTGEPLTIAAAKTPKFRAGKALKDAL</sequence>
<evidence type="ECO:0000250" key="1"/>
<evidence type="ECO:0000305" key="2"/>
<feature type="chain" id="PRO_0000104951" description="DNA-binding protein HU-beta">
    <location>
        <begin position="1"/>
        <end position="89"/>
    </location>
</feature>
<organism>
    <name type="scientific">Neisseria meningitidis serogroup A / serotype 4A (strain DSM 15465 / Z2491)</name>
    <dbReference type="NCBI Taxonomy" id="122587"/>
    <lineage>
        <taxon>Bacteria</taxon>
        <taxon>Pseudomonadati</taxon>
        <taxon>Pseudomonadota</taxon>
        <taxon>Betaproteobacteria</taxon>
        <taxon>Neisseriales</taxon>
        <taxon>Neisseriaceae</taxon>
        <taxon>Neisseria</taxon>
    </lineage>
</organism>
<accession>P64388</accession>
<accession>A1IS15</accession>
<accession>Q9JRI6</accession>
<reference key="1">
    <citation type="journal article" date="2000" name="Nature">
        <title>Complete DNA sequence of a serogroup A strain of Neisseria meningitidis Z2491.</title>
        <authorList>
            <person name="Parkhill J."/>
            <person name="Achtman M."/>
            <person name="James K.D."/>
            <person name="Bentley S.D."/>
            <person name="Churcher C.M."/>
            <person name="Klee S.R."/>
            <person name="Morelli G."/>
            <person name="Basham D."/>
            <person name="Brown D."/>
            <person name="Chillingworth T."/>
            <person name="Davies R.M."/>
            <person name="Davis P."/>
            <person name="Devlin K."/>
            <person name="Feltwell T."/>
            <person name="Hamlin N."/>
            <person name="Holroyd S."/>
            <person name="Jagels K."/>
            <person name="Leather S."/>
            <person name="Moule S."/>
            <person name="Mungall K.L."/>
            <person name="Quail M.A."/>
            <person name="Rajandream M.A."/>
            <person name="Rutherford K.M."/>
            <person name="Simmonds M."/>
            <person name="Skelton J."/>
            <person name="Whitehead S."/>
            <person name="Spratt B.G."/>
            <person name="Barrell B.G."/>
        </authorList>
    </citation>
    <scope>NUCLEOTIDE SEQUENCE [LARGE SCALE GENOMIC DNA]</scope>
    <source>
        <strain>DSM 15465 / Z2491</strain>
    </source>
</reference>
<comment type="function">
    <text evidence="1">Histone-like DNA-binding protein which is capable of wrapping DNA to stabilize it, and thus to prevent its denaturation under extreme environmental conditions.</text>
</comment>
<comment type="similarity">
    <text evidence="2">Belongs to the bacterial histone-like protein family.</text>
</comment>
<protein>
    <recommendedName>
        <fullName>DNA-binding protein HU-beta</fullName>
    </recommendedName>
</protein>